<comment type="function">
    <text evidence="2">Negative regulator of hepatic phosphatidylinositol 3-kinase (PI3K) activity.</text>
</comment>
<comment type="subcellular location">
    <subcellularLocation>
        <location evidence="3">Cell membrane</location>
        <topology evidence="4">Single-pass type I membrane protein</topology>
    </subcellularLocation>
</comment>
<comment type="sequence caution" evidence="7">
    <conflict type="erroneous initiation">
        <sequence resource="EMBL-CDS" id="ABF57405"/>
    </conflict>
</comment>
<dbReference type="EMBL" id="BT025449">
    <property type="protein sequence ID" value="ABF57405.1"/>
    <property type="status" value="ALT_INIT"/>
    <property type="molecule type" value="mRNA"/>
</dbReference>
<dbReference type="EMBL" id="BC114715">
    <property type="protein sequence ID" value="AAI14716.1"/>
    <property type="molecule type" value="mRNA"/>
</dbReference>
<dbReference type="RefSeq" id="NP_001069020.1">
    <property type="nucleotide sequence ID" value="NM_001075552.1"/>
</dbReference>
<dbReference type="FunCoup" id="Q1RMT9">
    <property type="interactions" value="192"/>
</dbReference>
<dbReference type="STRING" id="9913.ENSBTAP00000014109"/>
<dbReference type="PaxDb" id="9913-ENSBTAP00000014109"/>
<dbReference type="GeneID" id="512082"/>
<dbReference type="KEGG" id="bta:512082"/>
<dbReference type="CTD" id="113791"/>
<dbReference type="eggNOG" id="ENOG502QTWD">
    <property type="taxonomic scope" value="Eukaryota"/>
</dbReference>
<dbReference type="HOGENOM" id="CLU_092099_0_0_1"/>
<dbReference type="InParanoid" id="Q1RMT9"/>
<dbReference type="OrthoDB" id="9893972at2759"/>
<dbReference type="TreeFam" id="TF331319"/>
<dbReference type="Proteomes" id="UP000009136">
    <property type="component" value="Unplaced"/>
</dbReference>
<dbReference type="GO" id="GO:0005615">
    <property type="term" value="C:extracellular space"/>
    <property type="evidence" value="ECO:0000318"/>
    <property type="project" value="GO_Central"/>
</dbReference>
<dbReference type="GO" id="GO:0005886">
    <property type="term" value="C:plasma membrane"/>
    <property type="evidence" value="ECO:0007669"/>
    <property type="project" value="UniProtKB-SubCell"/>
</dbReference>
<dbReference type="GO" id="GO:0004175">
    <property type="term" value="F:endopeptidase activity"/>
    <property type="evidence" value="ECO:0000318"/>
    <property type="project" value="GO_Central"/>
</dbReference>
<dbReference type="GO" id="GO:0141039">
    <property type="term" value="F:phosphatidylinositol 3-kinase inhibitor activity"/>
    <property type="evidence" value="ECO:0000250"/>
    <property type="project" value="UniProtKB"/>
</dbReference>
<dbReference type="GO" id="GO:0005102">
    <property type="term" value="F:signaling receptor binding"/>
    <property type="evidence" value="ECO:0000318"/>
    <property type="project" value="GO_Central"/>
</dbReference>
<dbReference type="GO" id="GO:0051898">
    <property type="term" value="P:negative regulation of phosphatidylinositol 3-kinase/protein kinase B signal transduction"/>
    <property type="evidence" value="ECO:0000318"/>
    <property type="project" value="GO_Central"/>
</dbReference>
<dbReference type="CDD" id="cd00108">
    <property type="entry name" value="KR"/>
    <property type="match status" value="1"/>
</dbReference>
<dbReference type="FunFam" id="2.40.20.10:FF:000012">
    <property type="entry name" value="Phosphoinositide-3-kinase-interacting protein 1"/>
    <property type="match status" value="1"/>
</dbReference>
<dbReference type="Gene3D" id="2.40.20.10">
    <property type="entry name" value="Plasminogen Kringle 4"/>
    <property type="match status" value="1"/>
</dbReference>
<dbReference type="InterPro" id="IPR000001">
    <property type="entry name" value="Kringle"/>
</dbReference>
<dbReference type="InterPro" id="IPR013806">
    <property type="entry name" value="Kringle-like"/>
</dbReference>
<dbReference type="InterPro" id="IPR018056">
    <property type="entry name" value="Kringle_CS"/>
</dbReference>
<dbReference type="InterPro" id="IPR038178">
    <property type="entry name" value="Kringle_sf"/>
</dbReference>
<dbReference type="Pfam" id="PF00051">
    <property type="entry name" value="Kringle"/>
    <property type="match status" value="1"/>
</dbReference>
<dbReference type="SMART" id="SM00130">
    <property type="entry name" value="KR"/>
    <property type="match status" value="1"/>
</dbReference>
<dbReference type="SUPFAM" id="SSF57440">
    <property type="entry name" value="Kringle-like"/>
    <property type="match status" value="1"/>
</dbReference>
<dbReference type="PROSITE" id="PS00021">
    <property type="entry name" value="KRINGLE_1"/>
    <property type="match status" value="1"/>
</dbReference>
<dbReference type="PROSITE" id="PS50070">
    <property type="entry name" value="KRINGLE_2"/>
    <property type="match status" value="1"/>
</dbReference>
<proteinExistence type="evidence at transcript level"/>
<gene>
    <name type="primary">PIK3IP1</name>
    <name type="synonym">HGFL</name>
</gene>
<reference key="1">
    <citation type="journal article" date="2005" name="BMC Genomics">
        <title>Characterization of 954 bovine full-CDS cDNA sequences.</title>
        <authorList>
            <person name="Harhay G.P."/>
            <person name="Sonstegard T.S."/>
            <person name="Keele J.W."/>
            <person name="Heaton M.P."/>
            <person name="Clawson M.L."/>
            <person name="Snelling W.M."/>
            <person name="Wiedmann R.T."/>
            <person name="Van Tassell C.P."/>
            <person name="Smith T.P.L."/>
        </authorList>
    </citation>
    <scope>NUCLEOTIDE SEQUENCE [LARGE SCALE MRNA]</scope>
</reference>
<reference key="2">
    <citation type="submission" date="2006-04" db="EMBL/GenBank/DDBJ databases">
        <authorList>
            <consortium name="NIH - Mammalian Gene Collection (MGC) project"/>
        </authorList>
    </citation>
    <scope>NUCLEOTIDE SEQUENCE [LARGE SCALE MRNA]</scope>
    <source>
        <strain>Hereford</strain>
        <tissue>Uterus</tissue>
    </source>
</reference>
<organism>
    <name type="scientific">Bos taurus</name>
    <name type="common">Bovine</name>
    <dbReference type="NCBI Taxonomy" id="9913"/>
    <lineage>
        <taxon>Eukaryota</taxon>
        <taxon>Metazoa</taxon>
        <taxon>Chordata</taxon>
        <taxon>Craniata</taxon>
        <taxon>Vertebrata</taxon>
        <taxon>Euteleostomi</taxon>
        <taxon>Mammalia</taxon>
        <taxon>Eutheria</taxon>
        <taxon>Laurasiatheria</taxon>
        <taxon>Artiodactyla</taxon>
        <taxon>Ruminantia</taxon>
        <taxon>Pecora</taxon>
        <taxon>Bovidae</taxon>
        <taxon>Bovinae</taxon>
        <taxon>Bos</taxon>
    </lineage>
</organism>
<keyword id="KW-1003">Cell membrane</keyword>
<keyword id="KW-1015">Disulfide bond</keyword>
<keyword id="KW-0420">Kringle</keyword>
<keyword id="KW-0472">Membrane</keyword>
<keyword id="KW-1185">Reference proteome</keyword>
<keyword id="KW-0732">Signal</keyword>
<keyword id="KW-0812">Transmembrane</keyword>
<keyword id="KW-1133">Transmembrane helix</keyword>
<protein>
    <recommendedName>
        <fullName>Phosphoinositide-3-kinase-interacting protein 1</fullName>
    </recommendedName>
    <alternativeName>
        <fullName>Kringle domain-containing protein HGFL</fullName>
    </alternativeName>
</protein>
<feature type="signal peptide" evidence="1">
    <location>
        <begin position="1"/>
        <end position="21"/>
    </location>
</feature>
<feature type="chain" id="PRO_0000280346" description="Phosphoinositide-3-kinase-interacting protein 1">
    <location>
        <begin position="22"/>
        <end position="261"/>
    </location>
</feature>
<feature type="topological domain" description="Extracellular" evidence="4">
    <location>
        <begin position="22"/>
        <end position="166"/>
    </location>
</feature>
<feature type="transmembrane region" description="Helical" evidence="4">
    <location>
        <begin position="167"/>
        <end position="187"/>
    </location>
</feature>
<feature type="topological domain" description="Cytoplasmic" evidence="4">
    <location>
        <begin position="188"/>
        <end position="261"/>
    </location>
</feature>
<feature type="domain" description="Kringle" evidence="5">
    <location>
        <begin position="24"/>
        <end position="101"/>
    </location>
</feature>
<feature type="region of interest" description="Disordered" evidence="6">
    <location>
        <begin position="90"/>
        <end position="122"/>
    </location>
</feature>
<feature type="compositionally biased region" description="Basic and acidic residues" evidence="6">
    <location>
        <begin position="90"/>
        <end position="101"/>
    </location>
</feature>
<feature type="disulfide bond" evidence="5">
    <location>
        <begin position="25"/>
        <end position="101"/>
    </location>
</feature>
<feature type="disulfide bond" evidence="5">
    <location>
        <begin position="46"/>
        <end position="82"/>
    </location>
</feature>
<feature type="disulfide bond" evidence="5">
    <location>
        <begin position="70"/>
        <end position="96"/>
    </location>
</feature>
<feature type="sequence conflict" description="In Ref. 1; ABF57405." evidence="7" ref="1">
    <original>A</original>
    <variation>P</variation>
    <location>
        <position position="120"/>
    </location>
</feature>
<evidence type="ECO:0000250" key="1"/>
<evidence type="ECO:0000250" key="2">
    <source>
        <dbReference type="UniProtKB" id="Q7TMJ8"/>
    </source>
</evidence>
<evidence type="ECO:0000250" key="3">
    <source>
        <dbReference type="UniProtKB" id="Q96FE7"/>
    </source>
</evidence>
<evidence type="ECO:0000255" key="4"/>
<evidence type="ECO:0000255" key="5">
    <source>
        <dbReference type="PROSITE-ProRule" id="PRU00121"/>
    </source>
</evidence>
<evidence type="ECO:0000256" key="6">
    <source>
        <dbReference type="SAM" id="MobiDB-lite"/>
    </source>
</evidence>
<evidence type="ECO:0000305" key="7"/>
<accession>Q1RMT9</accession>
<accession>Q1JPA4</accession>
<sequence>MLLAWVRTILVSNMLLAEAYGSGGCFWDNGHLYRADQPSPAPGHSCLNWLDAQSGLAFAPESGAGNHSYCRNPDQDPRGPWCYVSGEAGAPEKRPCQDLRCPDTTSQGLPTSATETEEAAEVPGGDEVFAPANALPARSEAAAVQPVIGISQRVRVNSKEKKDLGTLGYVLGITMMVIIVVIGAGIVLGYTYKRGKDLKAQHEQKVCERELQRITLPLSAFTNPTCEIVDEKTVVVHASQTPVDLQEGSAPLMGQAGTPGA</sequence>
<name>P3IP1_BOVIN</name>